<protein>
    <recommendedName>
        <fullName evidence="1">Peptide methionine sulfoxide reductase MsrA</fullName>
        <shortName evidence="1">Protein-methionine-S-oxide reductase</shortName>
        <ecNumber evidence="1">1.8.4.11</ecNumber>
    </recommendedName>
    <alternativeName>
        <fullName evidence="1">Peptide-methionine (S)-S-oxide reductase</fullName>
        <shortName evidence="1">Peptide Met(O) reductase</shortName>
    </alternativeName>
</protein>
<keyword id="KW-0560">Oxidoreductase</keyword>
<keyword id="KW-1185">Reference proteome</keyword>
<accession>Q8EVK2</accession>
<evidence type="ECO:0000255" key="1">
    <source>
        <dbReference type="HAMAP-Rule" id="MF_01401"/>
    </source>
</evidence>
<proteinExistence type="inferred from homology"/>
<comment type="function">
    <text evidence="1">Has an important function as a repair enzyme for proteins that have been inactivated by oxidation. Catalyzes the reversible oxidation-reduction of methionine sulfoxide in proteins to methionine.</text>
</comment>
<comment type="catalytic activity">
    <reaction evidence="1">
        <text>L-methionyl-[protein] + [thioredoxin]-disulfide + H2O = L-methionyl-(S)-S-oxide-[protein] + [thioredoxin]-dithiol</text>
        <dbReference type="Rhea" id="RHEA:14217"/>
        <dbReference type="Rhea" id="RHEA-COMP:10698"/>
        <dbReference type="Rhea" id="RHEA-COMP:10700"/>
        <dbReference type="Rhea" id="RHEA-COMP:12313"/>
        <dbReference type="Rhea" id="RHEA-COMP:12315"/>
        <dbReference type="ChEBI" id="CHEBI:15377"/>
        <dbReference type="ChEBI" id="CHEBI:16044"/>
        <dbReference type="ChEBI" id="CHEBI:29950"/>
        <dbReference type="ChEBI" id="CHEBI:44120"/>
        <dbReference type="ChEBI" id="CHEBI:50058"/>
        <dbReference type="EC" id="1.8.4.11"/>
    </reaction>
</comment>
<comment type="catalytic activity">
    <reaction evidence="1">
        <text>[thioredoxin]-disulfide + L-methionine + H2O = L-methionine (S)-S-oxide + [thioredoxin]-dithiol</text>
        <dbReference type="Rhea" id="RHEA:19993"/>
        <dbReference type="Rhea" id="RHEA-COMP:10698"/>
        <dbReference type="Rhea" id="RHEA-COMP:10700"/>
        <dbReference type="ChEBI" id="CHEBI:15377"/>
        <dbReference type="ChEBI" id="CHEBI:29950"/>
        <dbReference type="ChEBI" id="CHEBI:50058"/>
        <dbReference type="ChEBI" id="CHEBI:57844"/>
        <dbReference type="ChEBI" id="CHEBI:58772"/>
        <dbReference type="EC" id="1.8.4.11"/>
    </reaction>
</comment>
<comment type="similarity">
    <text evidence="1">Belongs to the MsrA Met sulfoxide reductase family.</text>
</comment>
<dbReference type="EC" id="1.8.4.11" evidence="1"/>
<dbReference type="EMBL" id="BA000026">
    <property type="protein sequence ID" value="BAC44351.1"/>
    <property type="molecule type" value="Genomic_DNA"/>
</dbReference>
<dbReference type="SMR" id="Q8EVK2"/>
<dbReference type="FunCoup" id="Q8EVK2">
    <property type="interactions" value="191"/>
</dbReference>
<dbReference type="STRING" id="272633.gene:10731678"/>
<dbReference type="KEGG" id="mpe:MYPE5610"/>
<dbReference type="eggNOG" id="COG0225">
    <property type="taxonomic scope" value="Bacteria"/>
</dbReference>
<dbReference type="HOGENOM" id="CLU_031040_10_2_14"/>
<dbReference type="InParanoid" id="Q8EVK2"/>
<dbReference type="Proteomes" id="UP000002522">
    <property type="component" value="Chromosome"/>
</dbReference>
<dbReference type="GO" id="GO:0005737">
    <property type="term" value="C:cytoplasm"/>
    <property type="evidence" value="ECO:0007669"/>
    <property type="project" value="TreeGrafter"/>
</dbReference>
<dbReference type="GO" id="GO:0036456">
    <property type="term" value="F:L-methionine-(S)-S-oxide reductase activity"/>
    <property type="evidence" value="ECO:0007669"/>
    <property type="project" value="TreeGrafter"/>
</dbReference>
<dbReference type="GO" id="GO:0008113">
    <property type="term" value="F:peptide-methionine (S)-S-oxide reductase activity"/>
    <property type="evidence" value="ECO:0007669"/>
    <property type="project" value="UniProtKB-UniRule"/>
</dbReference>
<dbReference type="GO" id="GO:0034599">
    <property type="term" value="P:cellular response to oxidative stress"/>
    <property type="evidence" value="ECO:0007669"/>
    <property type="project" value="TreeGrafter"/>
</dbReference>
<dbReference type="GO" id="GO:0036211">
    <property type="term" value="P:protein modification process"/>
    <property type="evidence" value="ECO:0007669"/>
    <property type="project" value="UniProtKB-UniRule"/>
</dbReference>
<dbReference type="Gene3D" id="3.30.1060.10">
    <property type="entry name" value="Peptide methionine sulphoxide reductase MsrA"/>
    <property type="match status" value="1"/>
</dbReference>
<dbReference type="HAMAP" id="MF_01401">
    <property type="entry name" value="MsrA"/>
    <property type="match status" value="1"/>
</dbReference>
<dbReference type="InterPro" id="IPR002569">
    <property type="entry name" value="Met_Sox_Rdtase_MsrA_dom"/>
</dbReference>
<dbReference type="InterPro" id="IPR036509">
    <property type="entry name" value="Met_Sox_Rdtase_MsrA_sf"/>
</dbReference>
<dbReference type="InterPro" id="IPR050162">
    <property type="entry name" value="MsrA_MetSO_reductase"/>
</dbReference>
<dbReference type="NCBIfam" id="TIGR00401">
    <property type="entry name" value="msrA"/>
    <property type="match status" value="1"/>
</dbReference>
<dbReference type="PANTHER" id="PTHR42799">
    <property type="entry name" value="MITOCHONDRIAL PEPTIDE METHIONINE SULFOXIDE REDUCTASE"/>
    <property type="match status" value="1"/>
</dbReference>
<dbReference type="PANTHER" id="PTHR42799:SF2">
    <property type="entry name" value="MITOCHONDRIAL PEPTIDE METHIONINE SULFOXIDE REDUCTASE"/>
    <property type="match status" value="1"/>
</dbReference>
<dbReference type="Pfam" id="PF01625">
    <property type="entry name" value="PMSR"/>
    <property type="match status" value="1"/>
</dbReference>
<dbReference type="SUPFAM" id="SSF55068">
    <property type="entry name" value="Peptide methionine sulfoxide reductase"/>
    <property type="match status" value="1"/>
</dbReference>
<name>MSRA_MALP2</name>
<reference key="1">
    <citation type="journal article" date="2002" name="Nucleic Acids Res.">
        <title>The complete genomic sequence of Mycoplasma penetrans, an intracellular bacterial pathogen in humans.</title>
        <authorList>
            <person name="Sasaki Y."/>
            <person name="Ishikawa J."/>
            <person name="Yamashita A."/>
            <person name="Oshima K."/>
            <person name="Kenri T."/>
            <person name="Furuya K."/>
            <person name="Yoshino C."/>
            <person name="Horino A."/>
            <person name="Shiba T."/>
            <person name="Sasaki T."/>
            <person name="Hattori M."/>
        </authorList>
    </citation>
    <scope>NUCLEOTIDE SEQUENCE [LARGE SCALE GENOMIC DNA]</scope>
    <source>
        <strain>HF-2</strain>
    </source>
</reference>
<sequence length="160" mass="18579">MIKKIYLAGGCFWGIEQYYNLNQKIISTNVGYLNSKIDNPTYKDVCNNITDAVEAVELTYDDQVISLNEIIDLLFKVIDPTSINKQGNDIGRQYRTGIYSRDSNELMAIQEKINELQNNYSKLIQTEVMLVDNYYLAEEYHQKYLEKNPNGYCHINLKAK</sequence>
<feature type="chain" id="PRO_1000087355" description="Peptide methionine sulfoxide reductase MsrA">
    <location>
        <begin position="1"/>
        <end position="160"/>
    </location>
</feature>
<feature type="active site" evidence="1">
    <location>
        <position position="11"/>
    </location>
</feature>
<organism>
    <name type="scientific">Malacoplasma penetrans (strain HF-2)</name>
    <name type="common">Mycoplasma penetrans</name>
    <dbReference type="NCBI Taxonomy" id="272633"/>
    <lineage>
        <taxon>Bacteria</taxon>
        <taxon>Bacillati</taxon>
        <taxon>Mycoplasmatota</taxon>
        <taxon>Mycoplasmoidales</taxon>
        <taxon>Mycoplasmoidaceae</taxon>
        <taxon>Malacoplasma</taxon>
    </lineage>
</organism>
<gene>
    <name evidence="1" type="primary">msrA</name>
    <name type="ordered locus">MYPE5610</name>
</gene>